<reference key="1">
    <citation type="submission" date="2009-07" db="EMBL/GenBank/DDBJ databases">
        <title>Complete sequence of Pectobacterium carotovorum subsp. carotovorum PC1.</title>
        <authorList>
            <consortium name="US DOE Joint Genome Institute"/>
            <person name="Lucas S."/>
            <person name="Copeland A."/>
            <person name="Lapidus A."/>
            <person name="Glavina del Rio T."/>
            <person name="Tice H."/>
            <person name="Bruce D."/>
            <person name="Goodwin L."/>
            <person name="Pitluck S."/>
            <person name="Munk A.C."/>
            <person name="Brettin T."/>
            <person name="Detter J.C."/>
            <person name="Han C."/>
            <person name="Tapia R."/>
            <person name="Larimer F."/>
            <person name="Land M."/>
            <person name="Hauser L."/>
            <person name="Kyrpides N."/>
            <person name="Mikhailova N."/>
            <person name="Balakrishnan V."/>
            <person name="Glasner J."/>
            <person name="Perna N.T."/>
        </authorList>
    </citation>
    <scope>NUCLEOTIDE SEQUENCE [LARGE SCALE GENOMIC DNA]</scope>
    <source>
        <strain>PC1</strain>
    </source>
</reference>
<accession>C6DFY1</accession>
<organism>
    <name type="scientific">Pectobacterium carotovorum subsp. carotovorum (strain PC1)</name>
    <dbReference type="NCBI Taxonomy" id="561230"/>
    <lineage>
        <taxon>Bacteria</taxon>
        <taxon>Pseudomonadati</taxon>
        <taxon>Pseudomonadota</taxon>
        <taxon>Gammaproteobacteria</taxon>
        <taxon>Enterobacterales</taxon>
        <taxon>Pectobacteriaceae</taxon>
        <taxon>Pectobacterium</taxon>
    </lineage>
</organism>
<sequence length="293" mass="32025">MMRIALFLITNLAVMLVFGLVLSLTGIQSSSVQGLMIMAGLFGFGGAFVSLLMSKWMALRSVGGEVIEQPRNETERWLVETVRTQSQQAGIAMPQVAIYHAPDINAFATGARRDASLVAVSTGLLQNMSRDEAEAVIAHEISHIANGDMVTMTLVQGIVNTFVIFVSRLIAQVVSGFLSGNRDEGESSNGNPLVYFAVATVLELVFGILASIITMWFSRYREFHADAGSAKLVGREKMIAALQRLKTSYEPQEESSMMAFCINGKSKSFSELFMSHPPLDKRIEALRSGDYLK</sequence>
<protein>
    <recommendedName>
        <fullName evidence="1">Protease HtpX</fullName>
        <ecNumber evidence="1">3.4.24.-</ecNumber>
    </recommendedName>
    <alternativeName>
        <fullName evidence="1">Heat shock protein HtpX</fullName>
    </alternativeName>
</protein>
<proteinExistence type="inferred from homology"/>
<keyword id="KW-0997">Cell inner membrane</keyword>
<keyword id="KW-1003">Cell membrane</keyword>
<keyword id="KW-0378">Hydrolase</keyword>
<keyword id="KW-0472">Membrane</keyword>
<keyword id="KW-0479">Metal-binding</keyword>
<keyword id="KW-0482">Metalloprotease</keyword>
<keyword id="KW-0645">Protease</keyword>
<keyword id="KW-0812">Transmembrane</keyword>
<keyword id="KW-1133">Transmembrane helix</keyword>
<keyword id="KW-0862">Zinc</keyword>
<comment type="cofactor">
    <cofactor evidence="1">
        <name>Zn(2+)</name>
        <dbReference type="ChEBI" id="CHEBI:29105"/>
    </cofactor>
    <text evidence="1">Binds 1 zinc ion per subunit.</text>
</comment>
<comment type="subcellular location">
    <subcellularLocation>
        <location evidence="1">Cell inner membrane</location>
        <topology evidence="1">Multi-pass membrane protein</topology>
    </subcellularLocation>
</comment>
<comment type="similarity">
    <text evidence="1">Belongs to the peptidase M48B family.</text>
</comment>
<feature type="chain" id="PRO_1000203976" description="Protease HtpX">
    <location>
        <begin position="1"/>
        <end position="293"/>
    </location>
</feature>
<feature type="transmembrane region" description="Helical" evidence="1">
    <location>
        <begin position="4"/>
        <end position="24"/>
    </location>
</feature>
<feature type="transmembrane region" description="Helical" evidence="1">
    <location>
        <begin position="34"/>
        <end position="54"/>
    </location>
</feature>
<feature type="transmembrane region" description="Helical" evidence="1">
    <location>
        <begin position="158"/>
        <end position="178"/>
    </location>
</feature>
<feature type="transmembrane region" description="Helical" evidence="1">
    <location>
        <begin position="193"/>
        <end position="213"/>
    </location>
</feature>
<feature type="active site" evidence="1">
    <location>
        <position position="140"/>
    </location>
</feature>
<feature type="binding site" evidence="1">
    <location>
        <position position="139"/>
    </location>
    <ligand>
        <name>Zn(2+)</name>
        <dbReference type="ChEBI" id="CHEBI:29105"/>
        <note>catalytic</note>
    </ligand>
</feature>
<feature type="binding site" evidence="1">
    <location>
        <position position="143"/>
    </location>
    <ligand>
        <name>Zn(2+)</name>
        <dbReference type="ChEBI" id="CHEBI:29105"/>
        <note>catalytic</note>
    </ligand>
</feature>
<feature type="binding site" evidence="1">
    <location>
        <position position="222"/>
    </location>
    <ligand>
        <name>Zn(2+)</name>
        <dbReference type="ChEBI" id="CHEBI:29105"/>
        <note>catalytic</note>
    </ligand>
</feature>
<name>HTPX_PECCP</name>
<evidence type="ECO:0000255" key="1">
    <source>
        <dbReference type="HAMAP-Rule" id="MF_00188"/>
    </source>
</evidence>
<dbReference type="EC" id="3.4.24.-" evidence="1"/>
<dbReference type="EMBL" id="CP001657">
    <property type="protein sequence ID" value="ACT12924.1"/>
    <property type="molecule type" value="Genomic_DNA"/>
</dbReference>
<dbReference type="RefSeq" id="WP_015840126.1">
    <property type="nucleotide sequence ID" value="NC_012917.1"/>
</dbReference>
<dbReference type="SMR" id="C6DFY1"/>
<dbReference type="STRING" id="561230.PC1_1883"/>
<dbReference type="MEROPS" id="M48.002"/>
<dbReference type="GeneID" id="67793881"/>
<dbReference type="KEGG" id="pct:PC1_1883"/>
<dbReference type="eggNOG" id="COG0501">
    <property type="taxonomic scope" value="Bacteria"/>
</dbReference>
<dbReference type="HOGENOM" id="CLU_042266_1_0_6"/>
<dbReference type="OrthoDB" id="15218at2"/>
<dbReference type="Proteomes" id="UP000002736">
    <property type="component" value="Chromosome"/>
</dbReference>
<dbReference type="GO" id="GO:0005886">
    <property type="term" value="C:plasma membrane"/>
    <property type="evidence" value="ECO:0007669"/>
    <property type="project" value="UniProtKB-SubCell"/>
</dbReference>
<dbReference type="GO" id="GO:0004222">
    <property type="term" value="F:metalloendopeptidase activity"/>
    <property type="evidence" value="ECO:0007669"/>
    <property type="project" value="UniProtKB-UniRule"/>
</dbReference>
<dbReference type="GO" id="GO:0008270">
    <property type="term" value="F:zinc ion binding"/>
    <property type="evidence" value="ECO:0007669"/>
    <property type="project" value="UniProtKB-UniRule"/>
</dbReference>
<dbReference type="GO" id="GO:0006508">
    <property type="term" value="P:proteolysis"/>
    <property type="evidence" value="ECO:0007669"/>
    <property type="project" value="UniProtKB-KW"/>
</dbReference>
<dbReference type="CDD" id="cd07335">
    <property type="entry name" value="M48B_HtpX_like"/>
    <property type="match status" value="1"/>
</dbReference>
<dbReference type="FunFam" id="3.30.2010.10:FF:000001">
    <property type="entry name" value="Protease HtpX"/>
    <property type="match status" value="1"/>
</dbReference>
<dbReference type="Gene3D" id="3.30.2010.10">
    <property type="entry name" value="Metalloproteases ('zincins'), catalytic domain"/>
    <property type="match status" value="1"/>
</dbReference>
<dbReference type="HAMAP" id="MF_00188">
    <property type="entry name" value="Pept_M48_protease_HtpX"/>
    <property type="match status" value="1"/>
</dbReference>
<dbReference type="InterPro" id="IPR050083">
    <property type="entry name" value="HtpX_protease"/>
</dbReference>
<dbReference type="InterPro" id="IPR022919">
    <property type="entry name" value="Pept_M48_protease_HtpX"/>
</dbReference>
<dbReference type="InterPro" id="IPR001915">
    <property type="entry name" value="Peptidase_M48"/>
</dbReference>
<dbReference type="NCBIfam" id="NF003965">
    <property type="entry name" value="PRK05457.1"/>
    <property type="match status" value="1"/>
</dbReference>
<dbReference type="PANTHER" id="PTHR43221">
    <property type="entry name" value="PROTEASE HTPX"/>
    <property type="match status" value="1"/>
</dbReference>
<dbReference type="PANTHER" id="PTHR43221:SF1">
    <property type="entry name" value="PROTEASE HTPX"/>
    <property type="match status" value="1"/>
</dbReference>
<dbReference type="Pfam" id="PF01435">
    <property type="entry name" value="Peptidase_M48"/>
    <property type="match status" value="1"/>
</dbReference>
<gene>
    <name evidence="1" type="primary">htpX</name>
    <name type="ordered locus">PC1_1883</name>
</gene>